<accession>Q0A939</accession>
<comment type="catalytic activity">
    <reaction evidence="2">
        <text>GTP + H2O = 7,8-dihydroneopterin 3'-triphosphate + formate + H(+)</text>
        <dbReference type="Rhea" id="RHEA:17473"/>
        <dbReference type="ChEBI" id="CHEBI:15377"/>
        <dbReference type="ChEBI" id="CHEBI:15378"/>
        <dbReference type="ChEBI" id="CHEBI:15740"/>
        <dbReference type="ChEBI" id="CHEBI:37565"/>
        <dbReference type="ChEBI" id="CHEBI:58462"/>
        <dbReference type="EC" id="3.5.4.16"/>
    </reaction>
</comment>
<comment type="pathway">
    <text evidence="2">Cofactor biosynthesis; 7,8-dihydroneopterin triphosphate biosynthesis; 7,8-dihydroneopterin triphosphate from GTP: step 1/1.</text>
</comment>
<comment type="subunit">
    <text evidence="1">Toroid-shaped homodecamer, composed of two pentamers of five dimers.</text>
</comment>
<comment type="similarity">
    <text evidence="2">Belongs to the GTP cyclohydrolase I family.</text>
</comment>
<gene>
    <name evidence="2" type="primary">folE</name>
    <name type="ordered locus">Mlg_1299</name>
</gene>
<sequence length="185" mass="21008">MSERIEAAYRRILQDLGEDPDREGLKDTPARAAKAMRFLTKGYQEDLDQVLNGAVFSSDNDEMVIVRNIELYSLCEHHLLPFIGRAHVAYLPDGKVIGLSKVARIVDMYARRLQIQENLTRQIALAVQQVTGGKGVAVYINARHLCMMMRGVEKQNSEMSTSVMLGDFRENPKTRNEFLQLIRTP</sequence>
<dbReference type="EC" id="3.5.4.16" evidence="2"/>
<dbReference type="EMBL" id="CP000453">
    <property type="protein sequence ID" value="ABI56648.1"/>
    <property type="molecule type" value="Genomic_DNA"/>
</dbReference>
<dbReference type="RefSeq" id="WP_011629043.1">
    <property type="nucleotide sequence ID" value="NC_008340.1"/>
</dbReference>
<dbReference type="SMR" id="Q0A939"/>
<dbReference type="KEGG" id="aeh:Mlg_1299"/>
<dbReference type="eggNOG" id="COG0302">
    <property type="taxonomic scope" value="Bacteria"/>
</dbReference>
<dbReference type="HOGENOM" id="CLU_049768_3_1_6"/>
<dbReference type="OrthoDB" id="9801207at2"/>
<dbReference type="UniPathway" id="UPA00848">
    <property type="reaction ID" value="UER00151"/>
</dbReference>
<dbReference type="Proteomes" id="UP000001962">
    <property type="component" value="Chromosome"/>
</dbReference>
<dbReference type="GO" id="GO:0005737">
    <property type="term" value="C:cytoplasm"/>
    <property type="evidence" value="ECO:0007669"/>
    <property type="project" value="TreeGrafter"/>
</dbReference>
<dbReference type="GO" id="GO:0005525">
    <property type="term" value="F:GTP binding"/>
    <property type="evidence" value="ECO:0007669"/>
    <property type="project" value="UniProtKB-KW"/>
</dbReference>
<dbReference type="GO" id="GO:0003934">
    <property type="term" value="F:GTP cyclohydrolase I activity"/>
    <property type="evidence" value="ECO:0007669"/>
    <property type="project" value="UniProtKB-UniRule"/>
</dbReference>
<dbReference type="GO" id="GO:0008270">
    <property type="term" value="F:zinc ion binding"/>
    <property type="evidence" value="ECO:0007669"/>
    <property type="project" value="UniProtKB-UniRule"/>
</dbReference>
<dbReference type="GO" id="GO:0006730">
    <property type="term" value="P:one-carbon metabolic process"/>
    <property type="evidence" value="ECO:0007669"/>
    <property type="project" value="UniProtKB-UniRule"/>
</dbReference>
<dbReference type="GO" id="GO:0006729">
    <property type="term" value="P:tetrahydrobiopterin biosynthetic process"/>
    <property type="evidence" value="ECO:0007669"/>
    <property type="project" value="TreeGrafter"/>
</dbReference>
<dbReference type="GO" id="GO:0046654">
    <property type="term" value="P:tetrahydrofolate biosynthetic process"/>
    <property type="evidence" value="ECO:0007669"/>
    <property type="project" value="UniProtKB-UniRule"/>
</dbReference>
<dbReference type="CDD" id="cd00642">
    <property type="entry name" value="GTP_cyclohydro1"/>
    <property type="match status" value="1"/>
</dbReference>
<dbReference type="FunFam" id="1.10.286.10:FF:000003">
    <property type="entry name" value="GTP cyclohydrolase 1"/>
    <property type="match status" value="1"/>
</dbReference>
<dbReference type="FunFam" id="3.30.1130.10:FF:000001">
    <property type="entry name" value="GTP cyclohydrolase 1"/>
    <property type="match status" value="1"/>
</dbReference>
<dbReference type="Gene3D" id="1.10.286.10">
    <property type="match status" value="1"/>
</dbReference>
<dbReference type="Gene3D" id="3.30.1130.10">
    <property type="match status" value="1"/>
</dbReference>
<dbReference type="HAMAP" id="MF_00223">
    <property type="entry name" value="FolE"/>
    <property type="match status" value="1"/>
</dbReference>
<dbReference type="InterPro" id="IPR043133">
    <property type="entry name" value="GTP-CH-I_C/QueF"/>
</dbReference>
<dbReference type="InterPro" id="IPR043134">
    <property type="entry name" value="GTP-CH-I_N"/>
</dbReference>
<dbReference type="InterPro" id="IPR001474">
    <property type="entry name" value="GTP_CycHdrlase_I"/>
</dbReference>
<dbReference type="InterPro" id="IPR018234">
    <property type="entry name" value="GTP_CycHdrlase_I_CS"/>
</dbReference>
<dbReference type="InterPro" id="IPR020602">
    <property type="entry name" value="GTP_CycHdrlase_I_dom"/>
</dbReference>
<dbReference type="NCBIfam" id="TIGR00063">
    <property type="entry name" value="folE"/>
    <property type="match status" value="1"/>
</dbReference>
<dbReference type="NCBIfam" id="NF006825">
    <property type="entry name" value="PRK09347.1-2"/>
    <property type="match status" value="1"/>
</dbReference>
<dbReference type="NCBIfam" id="NF006826">
    <property type="entry name" value="PRK09347.1-3"/>
    <property type="match status" value="1"/>
</dbReference>
<dbReference type="PANTHER" id="PTHR11109:SF7">
    <property type="entry name" value="GTP CYCLOHYDROLASE 1"/>
    <property type="match status" value="1"/>
</dbReference>
<dbReference type="PANTHER" id="PTHR11109">
    <property type="entry name" value="GTP CYCLOHYDROLASE I"/>
    <property type="match status" value="1"/>
</dbReference>
<dbReference type="Pfam" id="PF01227">
    <property type="entry name" value="GTP_cyclohydroI"/>
    <property type="match status" value="1"/>
</dbReference>
<dbReference type="SUPFAM" id="SSF55620">
    <property type="entry name" value="Tetrahydrobiopterin biosynthesis enzymes-like"/>
    <property type="match status" value="1"/>
</dbReference>
<dbReference type="PROSITE" id="PS00859">
    <property type="entry name" value="GTP_CYCLOHYDROL_1_1"/>
    <property type="match status" value="1"/>
</dbReference>
<dbReference type="PROSITE" id="PS00860">
    <property type="entry name" value="GTP_CYCLOHYDROL_1_2"/>
    <property type="match status" value="1"/>
</dbReference>
<organism>
    <name type="scientific">Alkalilimnicola ehrlichii (strain ATCC BAA-1101 / DSM 17681 / MLHE-1)</name>
    <dbReference type="NCBI Taxonomy" id="187272"/>
    <lineage>
        <taxon>Bacteria</taxon>
        <taxon>Pseudomonadati</taxon>
        <taxon>Pseudomonadota</taxon>
        <taxon>Gammaproteobacteria</taxon>
        <taxon>Chromatiales</taxon>
        <taxon>Ectothiorhodospiraceae</taxon>
        <taxon>Alkalilimnicola</taxon>
    </lineage>
</organism>
<reference key="1">
    <citation type="submission" date="2006-08" db="EMBL/GenBank/DDBJ databases">
        <title>Complete sequence of Alkalilimnicola ehrilichei MLHE-1.</title>
        <authorList>
            <person name="Copeland A."/>
            <person name="Lucas S."/>
            <person name="Lapidus A."/>
            <person name="Barry K."/>
            <person name="Detter J.C."/>
            <person name="Glavina del Rio T."/>
            <person name="Hammon N."/>
            <person name="Israni S."/>
            <person name="Dalin E."/>
            <person name="Tice H."/>
            <person name="Pitluck S."/>
            <person name="Sims D."/>
            <person name="Brettin T."/>
            <person name="Bruce D."/>
            <person name="Han C."/>
            <person name="Tapia R."/>
            <person name="Gilna P."/>
            <person name="Schmutz J."/>
            <person name="Larimer F."/>
            <person name="Land M."/>
            <person name="Hauser L."/>
            <person name="Kyrpides N."/>
            <person name="Mikhailova N."/>
            <person name="Oremland R.S."/>
            <person name="Hoeft S.E."/>
            <person name="Switzer-Blum J."/>
            <person name="Kulp T."/>
            <person name="King G."/>
            <person name="Tabita R."/>
            <person name="Witte B."/>
            <person name="Santini J.M."/>
            <person name="Basu P."/>
            <person name="Hollibaugh J.T."/>
            <person name="Xie G."/>
            <person name="Stolz J.F."/>
            <person name="Richardson P."/>
        </authorList>
    </citation>
    <scope>NUCLEOTIDE SEQUENCE [LARGE SCALE GENOMIC DNA]</scope>
    <source>
        <strain>ATCC BAA-1101 / DSM 17681 / MLHE-1</strain>
    </source>
</reference>
<proteinExistence type="inferred from homology"/>
<feature type="chain" id="PRO_1000043656" description="GTP cyclohydrolase 1">
    <location>
        <begin position="1"/>
        <end position="185"/>
    </location>
</feature>
<feature type="binding site" evidence="2">
    <location>
        <position position="75"/>
    </location>
    <ligand>
        <name>Zn(2+)</name>
        <dbReference type="ChEBI" id="CHEBI:29105"/>
    </ligand>
</feature>
<feature type="binding site" evidence="2">
    <location>
        <position position="78"/>
    </location>
    <ligand>
        <name>Zn(2+)</name>
        <dbReference type="ChEBI" id="CHEBI:29105"/>
    </ligand>
</feature>
<feature type="binding site" evidence="2">
    <location>
        <position position="146"/>
    </location>
    <ligand>
        <name>Zn(2+)</name>
        <dbReference type="ChEBI" id="CHEBI:29105"/>
    </ligand>
</feature>
<evidence type="ECO:0000250" key="1"/>
<evidence type="ECO:0000255" key="2">
    <source>
        <dbReference type="HAMAP-Rule" id="MF_00223"/>
    </source>
</evidence>
<keyword id="KW-0342">GTP-binding</keyword>
<keyword id="KW-0378">Hydrolase</keyword>
<keyword id="KW-0479">Metal-binding</keyword>
<keyword id="KW-0547">Nucleotide-binding</keyword>
<keyword id="KW-0554">One-carbon metabolism</keyword>
<keyword id="KW-1185">Reference proteome</keyword>
<keyword id="KW-0862">Zinc</keyword>
<protein>
    <recommendedName>
        <fullName evidence="2">GTP cyclohydrolase 1</fullName>
        <ecNumber evidence="2">3.5.4.16</ecNumber>
    </recommendedName>
    <alternativeName>
        <fullName evidence="2">GTP cyclohydrolase I</fullName>
        <shortName evidence="2">GTP-CH-I</shortName>
    </alternativeName>
</protein>
<name>GCH1_ALKEH</name>